<comment type="function">
    <text evidence="1">Catalyzes the reversible phosphatidyl group transfer from one phosphatidylglycerol molecule to another to form cardiolipin (CL) (diphosphatidylglycerol) and glycerol.</text>
</comment>
<comment type="catalytic activity">
    <reaction evidence="1">
        <text>2 a 1,2-diacyl-sn-glycero-3-phospho-(1'-sn-glycerol) = a cardiolipin + glycerol</text>
        <dbReference type="Rhea" id="RHEA:31451"/>
        <dbReference type="ChEBI" id="CHEBI:17754"/>
        <dbReference type="ChEBI" id="CHEBI:62237"/>
        <dbReference type="ChEBI" id="CHEBI:64716"/>
    </reaction>
</comment>
<comment type="subcellular location">
    <subcellularLocation>
        <location evidence="1">Cell inner membrane</location>
        <topology evidence="1">Multi-pass membrane protein</topology>
    </subcellularLocation>
</comment>
<comment type="similarity">
    <text evidence="1">Belongs to the phospholipase D family. Cardiolipin synthase subfamily. ClsA sub-subfamily.</text>
</comment>
<evidence type="ECO:0000255" key="1">
    <source>
        <dbReference type="HAMAP-Rule" id="MF_00190"/>
    </source>
</evidence>
<protein>
    <recommendedName>
        <fullName evidence="1">Cardiolipin synthase A</fullName>
        <shortName evidence="1">CL synthase</shortName>
        <ecNumber evidence="1">2.7.8.-</ecNumber>
    </recommendedName>
</protein>
<keyword id="KW-0997">Cell inner membrane</keyword>
<keyword id="KW-1003">Cell membrane</keyword>
<keyword id="KW-0444">Lipid biosynthesis</keyword>
<keyword id="KW-0443">Lipid metabolism</keyword>
<keyword id="KW-0472">Membrane</keyword>
<keyword id="KW-0594">Phospholipid biosynthesis</keyword>
<keyword id="KW-1208">Phospholipid metabolism</keyword>
<keyword id="KW-0677">Repeat</keyword>
<keyword id="KW-0808">Transferase</keyword>
<keyword id="KW-0812">Transmembrane</keyword>
<keyword id="KW-1133">Transmembrane helix</keyword>
<name>CLSA_SALCH</name>
<reference key="1">
    <citation type="journal article" date="2005" name="Nucleic Acids Res.">
        <title>The genome sequence of Salmonella enterica serovar Choleraesuis, a highly invasive and resistant zoonotic pathogen.</title>
        <authorList>
            <person name="Chiu C.-H."/>
            <person name="Tang P."/>
            <person name="Chu C."/>
            <person name="Hu S."/>
            <person name="Bao Q."/>
            <person name="Yu J."/>
            <person name="Chou Y.-Y."/>
            <person name="Wang H.-S."/>
            <person name="Lee Y.-S."/>
        </authorList>
    </citation>
    <scope>NUCLEOTIDE SEQUENCE [LARGE SCALE GENOMIC DNA]</scope>
    <source>
        <strain>SC-B67</strain>
    </source>
</reference>
<accession>Q57NS0</accession>
<organism>
    <name type="scientific">Salmonella choleraesuis (strain SC-B67)</name>
    <dbReference type="NCBI Taxonomy" id="321314"/>
    <lineage>
        <taxon>Bacteria</taxon>
        <taxon>Pseudomonadati</taxon>
        <taxon>Pseudomonadota</taxon>
        <taxon>Gammaproteobacteria</taxon>
        <taxon>Enterobacterales</taxon>
        <taxon>Enterobacteriaceae</taxon>
        <taxon>Salmonella</taxon>
    </lineage>
</organism>
<gene>
    <name evidence="1" type="primary">clsA</name>
    <name type="synonym">cls</name>
    <name type="ordered locus">SCH_1735</name>
</gene>
<dbReference type="EC" id="2.7.8.-" evidence="1"/>
<dbReference type="EMBL" id="AE017220">
    <property type="protein sequence ID" value="AAX65641.1"/>
    <property type="molecule type" value="Genomic_DNA"/>
</dbReference>
<dbReference type="RefSeq" id="WP_000206886.1">
    <property type="nucleotide sequence ID" value="NC_006905.1"/>
</dbReference>
<dbReference type="SMR" id="Q57NS0"/>
<dbReference type="KEGG" id="sec:SCH_1735"/>
<dbReference type="HOGENOM" id="CLU_038053_1_0_6"/>
<dbReference type="Proteomes" id="UP000000538">
    <property type="component" value="Chromosome"/>
</dbReference>
<dbReference type="GO" id="GO:0005886">
    <property type="term" value="C:plasma membrane"/>
    <property type="evidence" value="ECO:0007669"/>
    <property type="project" value="UniProtKB-SubCell"/>
</dbReference>
<dbReference type="GO" id="GO:0008808">
    <property type="term" value="F:cardiolipin synthase activity"/>
    <property type="evidence" value="ECO:0007669"/>
    <property type="project" value="InterPro"/>
</dbReference>
<dbReference type="GO" id="GO:0032049">
    <property type="term" value="P:cardiolipin biosynthetic process"/>
    <property type="evidence" value="ECO:0007669"/>
    <property type="project" value="InterPro"/>
</dbReference>
<dbReference type="CDD" id="cd09152">
    <property type="entry name" value="PLDc_EcCLS_like_1"/>
    <property type="match status" value="1"/>
</dbReference>
<dbReference type="CDD" id="cd09158">
    <property type="entry name" value="PLDc_EcCLS_like_2"/>
    <property type="match status" value="1"/>
</dbReference>
<dbReference type="FunFam" id="3.30.870.10:FF:000002">
    <property type="entry name" value="Cardiolipin synthase A"/>
    <property type="match status" value="1"/>
</dbReference>
<dbReference type="FunFam" id="3.30.870.10:FF:000003">
    <property type="entry name" value="Cardiolipin synthase A"/>
    <property type="match status" value="1"/>
</dbReference>
<dbReference type="Gene3D" id="3.30.870.10">
    <property type="entry name" value="Endonuclease Chain A"/>
    <property type="match status" value="2"/>
</dbReference>
<dbReference type="HAMAP" id="MF_00190">
    <property type="entry name" value="Cardiolipin_synth_ClsA"/>
    <property type="match status" value="1"/>
</dbReference>
<dbReference type="InterPro" id="IPR022924">
    <property type="entry name" value="Cardiolipin_synthase"/>
</dbReference>
<dbReference type="InterPro" id="IPR030840">
    <property type="entry name" value="CL_synthase_A"/>
</dbReference>
<dbReference type="InterPro" id="IPR027379">
    <property type="entry name" value="CLS_N"/>
</dbReference>
<dbReference type="InterPro" id="IPR025202">
    <property type="entry name" value="PLD-like_dom"/>
</dbReference>
<dbReference type="InterPro" id="IPR001736">
    <property type="entry name" value="PLipase_D/transphosphatidylase"/>
</dbReference>
<dbReference type="NCBIfam" id="TIGR04265">
    <property type="entry name" value="bac_cardiolipin"/>
    <property type="match status" value="1"/>
</dbReference>
<dbReference type="PANTHER" id="PTHR21248">
    <property type="entry name" value="CARDIOLIPIN SYNTHASE"/>
    <property type="match status" value="1"/>
</dbReference>
<dbReference type="PANTHER" id="PTHR21248:SF22">
    <property type="entry name" value="PHOSPHOLIPASE D"/>
    <property type="match status" value="1"/>
</dbReference>
<dbReference type="Pfam" id="PF13091">
    <property type="entry name" value="PLDc_2"/>
    <property type="match status" value="2"/>
</dbReference>
<dbReference type="Pfam" id="PF13396">
    <property type="entry name" value="PLDc_N"/>
    <property type="match status" value="1"/>
</dbReference>
<dbReference type="SMART" id="SM00155">
    <property type="entry name" value="PLDc"/>
    <property type="match status" value="2"/>
</dbReference>
<dbReference type="SUPFAM" id="SSF56024">
    <property type="entry name" value="Phospholipase D/nuclease"/>
    <property type="match status" value="2"/>
</dbReference>
<dbReference type="PROSITE" id="PS50035">
    <property type="entry name" value="PLD"/>
    <property type="match status" value="2"/>
</dbReference>
<proteinExistence type="inferred from homology"/>
<sequence length="486" mass="54734">MTTFYTVVSWLVILGYWVLIAGVTLRILMKRRAVPSAMAWLLIIYILPLVGIIAYLSVGELHLGKRRAERARAMWPSTAKWLNDLKACKHIFAQENSSVASSLFKLCERRQGIAGVKGNQLQLLTDSDDVMQALIRDIQLARHNIEMVFYIWQPGGMADQVAESLMAAARRGIHCRLMLDSAGSVAFFRSPWAAMMRNAGIEVVEALKVNLMRVFLRRMDLRQHRKMVMIDNYIAYTGSMNMVDPRFFKQDAGVGQWVDLMARMEGPVATAMGIVYSCDWEIETGKRILPPPPDVNIMPFEQASGHTIHTIASGPGFPEDLIHQALLTATYAAREYLIMTTPYFVPSDDLLHAICTAAQRGVDVSIILPRKNDSLLVGWASRAFFSELLAAGVKIYQFEGGLLHTKSVLVDGELSLVGTVNLDMRSLWLNFEITLVIDDTGFGADLAAVQDDYISRSRLLDARLWVKRPLWQRITERLFYFFSPLL</sequence>
<feature type="chain" id="PRO_1000058491" description="Cardiolipin synthase A">
    <location>
        <begin position="1"/>
        <end position="486"/>
    </location>
</feature>
<feature type="transmembrane region" description="Helical" evidence="1">
    <location>
        <begin position="3"/>
        <end position="23"/>
    </location>
</feature>
<feature type="transmembrane region" description="Helical" evidence="1">
    <location>
        <begin position="38"/>
        <end position="58"/>
    </location>
</feature>
<feature type="domain" description="PLD phosphodiesterase 1" evidence="1">
    <location>
        <begin position="219"/>
        <end position="246"/>
    </location>
</feature>
<feature type="domain" description="PLD phosphodiesterase 2" evidence="1">
    <location>
        <begin position="399"/>
        <end position="426"/>
    </location>
</feature>
<feature type="active site" evidence="1">
    <location>
        <position position="224"/>
    </location>
</feature>
<feature type="active site" evidence="1">
    <location>
        <position position="226"/>
    </location>
</feature>
<feature type="active site" evidence="1">
    <location>
        <position position="231"/>
    </location>
</feature>
<feature type="active site" evidence="1">
    <location>
        <position position="404"/>
    </location>
</feature>
<feature type="active site" evidence="1">
    <location>
        <position position="406"/>
    </location>
</feature>
<feature type="active site" evidence="1">
    <location>
        <position position="411"/>
    </location>
</feature>